<reference key="1">
    <citation type="journal article" date="2003" name="DNA Res.">
        <title>Complete genome structure of Gloeobacter violaceus PCC 7421, a cyanobacterium that lacks thylakoids.</title>
        <authorList>
            <person name="Nakamura Y."/>
            <person name="Kaneko T."/>
            <person name="Sato S."/>
            <person name="Mimuro M."/>
            <person name="Miyashita H."/>
            <person name="Tsuchiya T."/>
            <person name="Sasamoto S."/>
            <person name="Watanabe A."/>
            <person name="Kawashima K."/>
            <person name="Kishida Y."/>
            <person name="Kiyokawa C."/>
            <person name="Kohara M."/>
            <person name="Matsumoto M."/>
            <person name="Matsuno A."/>
            <person name="Nakazaki N."/>
            <person name="Shimpo S."/>
            <person name="Takeuchi C."/>
            <person name="Yamada M."/>
            <person name="Tabata S."/>
        </authorList>
    </citation>
    <scope>NUCLEOTIDE SEQUENCE [LARGE SCALE GENOMIC DNA]</scope>
    <source>
        <strain>ATCC 29082 / PCC 7421</strain>
    </source>
</reference>
<keyword id="KW-0997">Cell inner membrane</keyword>
<keyword id="KW-1003">Cell membrane</keyword>
<keyword id="KW-0472">Membrane</keyword>
<keyword id="KW-0520">NAD</keyword>
<keyword id="KW-0521">NADP</keyword>
<keyword id="KW-0618">Plastoquinone</keyword>
<keyword id="KW-0874">Quinone</keyword>
<keyword id="KW-1185">Reference proteome</keyword>
<keyword id="KW-1278">Translocase</keyword>
<keyword id="KW-0813">Transport</keyword>
<evidence type="ECO:0000255" key="1">
    <source>
        <dbReference type="HAMAP-Rule" id="MF_01353"/>
    </source>
</evidence>
<protein>
    <recommendedName>
        <fullName evidence="1">NAD(P)H-quinone oxidoreductase subunit N</fullName>
        <ecNumber evidence="1">7.1.1.-</ecNumber>
    </recommendedName>
    <alternativeName>
        <fullName evidence="1">NAD(P)H dehydrogenase I subunit N</fullName>
        <shortName evidence="1">NDH-1 subunit N</shortName>
        <shortName evidence="1">NDH-N</shortName>
    </alternativeName>
</protein>
<feature type="chain" id="PRO_0000352216" description="NAD(P)H-quinone oxidoreductase subunit N">
    <location>
        <begin position="1"/>
        <end position="159"/>
    </location>
</feature>
<comment type="function">
    <text evidence="1">NDH-1 shuttles electrons from an unknown electron donor, via FMN and iron-sulfur (Fe-S) centers, to quinones in the respiratory and/or the photosynthetic chain. The immediate electron acceptor for the enzyme in this species is believed to be plastoquinone. Couples the redox reaction to proton translocation, and thus conserves the redox energy in a proton gradient. Cyanobacterial NDH-1 also plays a role in inorganic carbon-concentration.</text>
</comment>
<comment type="catalytic activity">
    <reaction evidence="1">
        <text>a plastoquinone + NADH + (n+1) H(+)(in) = a plastoquinol + NAD(+) + n H(+)(out)</text>
        <dbReference type="Rhea" id="RHEA:42608"/>
        <dbReference type="Rhea" id="RHEA-COMP:9561"/>
        <dbReference type="Rhea" id="RHEA-COMP:9562"/>
        <dbReference type="ChEBI" id="CHEBI:15378"/>
        <dbReference type="ChEBI" id="CHEBI:17757"/>
        <dbReference type="ChEBI" id="CHEBI:57540"/>
        <dbReference type="ChEBI" id="CHEBI:57945"/>
        <dbReference type="ChEBI" id="CHEBI:62192"/>
    </reaction>
</comment>
<comment type="catalytic activity">
    <reaction evidence="1">
        <text>a plastoquinone + NADPH + (n+1) H(+)(in) = a plastoquinol + NADP(+) + n H(+)(out)</text>
        <dbReference type="Rhea" id="RHEA:42612"/>
        <dbReference type="Rhea" id="RHEA-COMP:9561"/>
        <dbReference type="Rhea" id="RHEA-COMP:9562"/>
        <dbReference type="ChEBI" id="CHEBI:15378"/>
        <dbReference type="ChEBI" id="CHEBI:17757"/>
        <dbReference type="ChEBI" id="CHEBI:57783"/>
        <dbReference type="ChEBI" id="CHEBI:58349"/>
        <dbReference type="ChEBI" id="CHEBI:62192"/>
    </reaction>
</comment>
<comment type="subunit">
    <text evidence="1">NDH-1 can be composed of about 15 different subunits; different subcomplexes with different compositions have been identified which probably have different functions.</text>
</comment>
<comment type="subcellular location">
    <subcellularLocation>
        <location evidence="1">Cell inner membrane</location>
        <topology evidence="1">Peripheral membrane protein</topology>
        <orientation evidence="1">Cytoplasmic side</orientation>
    </subcellularLocation>
</comment>
<comment type="similarity">
    <text evidence="1">Belongs to the complex I NdhN subunit family.</text>
</comment>
<proteinExistence type="inferred from homology"/>
<accession>Q7NEV8</accession>
<sequence>MPLLNLVLDNGSRFVADVEKHSSIALWAPPEGGIEGNYQRRLRGIGYRTQIITAKGLGDISRFLLESHGVRPAHLGKKDKRVFTLPPELAIYMDTLPASAKGFVLWIIEGKVLSLFELESLVGLPAAVPKLKVIVEVGSDYNIRWMPLEQAVSKMAEGR</sequence>
<gene>
    <name evidence="1" type="primary">ndhN</name>
    <name type="ordered locus">gll3770</name>
</gene>
<dbReference type="EC" id="7.1.1.-" evidence="1"/>
<dbReference type="EMBL" id="BA000045">
    <property type="protein sequence ID" value="BAC91711.1"/>
    <property type="molecule type" value="Genomic_DNA"/>
</dbReference>
<dbReference type="RefSeq" id="NP_926716.1">
    <property type="nucleotide sequence ID" value="NC_005125.1"/>
</dbReference>
<dbReference type="RefSeq" id="WP_011143759.1">
    <property type="nucleotide sequence ID" value="NC_005125.1"/>
</dbReference>
<dbReference type="SMR" id="Q7NEV8"/>
<dbReference type="STRING" id="251221.gene:10761287"/>
<dbReference type="EnsemblBacteria" id="BAC91711">
    <property type="protein sequence ID" value="BAC91711"/>
    <property type="gene ID" value="BAC91711"/>
</dbReference>
<dbReference type="KEGG" id="gvi:gll3770"/>
<dbReference type="PATRIC" id="fig|251221.4.peg.3805"/>
<dbReference type="eggNOG" id="ENOG502ZBMI">
    <property type="taxonomic scope" value="Bacteria"/>
</dbReference>
<dbReference type="HOGENOM" id="CLU_087432_0_0_3"/>
<dbReference type="InParanoid" id="Q7NEV8"/>
<dbReference type="OrthoDB" id="510798at2"/>
<dbReference type="PhylomeDB" id="Q7NEV8"/>
<dbReference type="Proteomes" id="UP000000557">
    <property type="component" value="Chromosome"/>
</dbReference>
<dbReference type="GO" id="GO:0005886">
    <property type="term" value="C:plasma membrane"/>
    <property type="evidence" value="ECO:0007669"/>
    <property type="project" value="UniProtKB-SubCell"/>
</dbReference>
<dbReference type="GO" id="GO:0016655">
    <property type="term" value="F:oxidoreductase activity, acting on NAD(P)H, quinone or similar compound as acceptor"/>
    <property type="evidence" value="ECO:0007669"/>
    <property type="project" value="UniProtKB-UniRule"/>
</dbReference>
<dbReference type="GO" id="GO:0048038">
    <property type="term" value="F:quinone binding"/>
    <property type="evidence" value="ECO:0007669"/>
    <property type="project" value="UniProtKB-KW"/>
</dbReference>
<dbReference type="HAMAP" id="MF_01353">
    <property type="entry name" value="NDH1_NDH1N"/>
    <property type="match status" value="1"/>
</dbReference>
<dbReference type="InterPro" id="IPR020874">
    <property type="entry name" value="NAD(P)H-quinone_OxRdtase_su_N"/>
</dbReference>
<dbReference type="PANTHER" id="PTHR35515">
    <property type="entry name" value="NAD(P)H-QUINONE OXIDOREDUCTASE SUBUNIT N, CHLOROPLASTIC"/>
    <property type="match status" value="1"/>
</dbReference>
<dbReference type="PANTHER" id="PTHR35515:SF1">
    <property type="entry name" value="NAD(P)H-QUINONE OXIDOREDUCTASE SUBUNIT N, CHLOROPLASTIC"/>
    <property type="match status" value="1"/>
</dbReference>
<dbReference type="Pfam" id="PF11909">
    <property type="entry name" value="NdhN"/>
    <property type="match status" value="1"/>
</dbReference>
<name>NDHN_GLOVI</name>
<organism>
    <name type="scientific">Gloeobacter violaceus (strain ATCC 29082 / PCC 7421)</name>
    <dbReference type="NCBI Taxonomy" id="251221"/>
    <lineage>
        <taxon>Bacteria</taxon>
        <taxon>Bacillati</taxon>
        <taxon>Cyanobacteriota</taxon>
        <taxon>Cyanophyceae</taxon>
        <taxon>Gloeobacterales</taxon>
        <taxon>Gloeobacteraceae</taxon>
        <taxon>Gloeobacter</taxon>
    </lineage>
</organism>